<evidence type="ECO:0000255" key="1">
    <source>
        <dbReference type="HAMAP-Rule" id="MF_00583"/>
    </source>
</evidence>
<evidence type="ECO:0000269" key="2">
    <source>
    </source>
</evidence>
<evidence type="ECO:0000303" key="3">
    <source>
    </source>
</evidence>
<evidence type="ECO:0000303" key="4">
    <source>
    </source>
</evidence>
<evidence type="ECO:0000305" key="5"/>
<evidence type="ECO:0000305" key="6">
    <source>
    </source>
</evidence>
<evidence type="ECO:0007744" key="7">
    <source>
        <dbReference type="PDB" id="4TWB"/>
    </source>
</evidence>
<evidence type="ECO:0007829" key="8">
    <source>
        <dbReference type="PDB" id="4TWB"/>
    </source>
</evidence>
<comment type="function">
    <text evidence="1 6">Involved in the biosynthesis of the central metabolite phospho-alpha-D-ribosyl-1-pyrophosphate (PRPP) via the transfer of pyrophosphoryl group from ATP to 1-hydroxyl of ribose-5-phosphate (Rib-5-P).</text>
</comment>
<comment type="catalytic activity">
    <reaction evidence="1">
        <text>D-ribose 5-phosphate + ATP = 5-phospho-alpha-D-ribose 1-diphosphate + AMP + H(+)</text>
        <dbReference type="Rhea" id="RHEA:15609"/>
        <dbReference type="ChEBI" id="CHEBI:15378"/>
        <dbReference type="ChEBI" id="CHEBI:30616"/>
        <dbReference type="ChEBI" id="CHEBI:58017"/>
        <dbReference type="ChEBI" id="CHEBI:78346"/>
        <dbReference type="ChEBI" id="CHEBI:456215"/>
        <dbReference type="EC" id="2.7.6.1"/>
    </reaction>
</comment>
<comment type="cofactor">
    <cofactor evidence="1">
        <name>Mg(2+)</name>
        <dbReference type="ChEBI" id="CHEBI:18420"/>
    </cofactor>
    <text evidence="1">Binds 2 Mg(2+) ions per subunit.</text>
</comment>
<comment type="pathway">
    <text evidence="1">Metabolic intermediate biosynthesis; 5-phospho-alpha-D-ribose 1-diphosphate biosynthesis; 5-phospho-alpha-D-ribose 1-diphosphate from D-ribose 5-phosphate (route I): step 1/1.</text>
</comment>
<comment type="subunit">
    <text evidence="4 6">Homodimer.</text>
</comment>
<comment type="subcellular location">
    <subcellularLocation>
        <location evidence="1">Cytoplasm</location>
    </subcellularLocation>
</comment>
<comment type="similarity">
    <text evidence="1 4">Belongs to the ribose-phosphate pyrophosphokinase family. Class III (archaeal) subfamily.</text>
</comment>
<comment type="sequence caution" evidence="5">
    <conflict type="erroneous initiation">
        <sequence resource="EMBL-CDS" id="AAK41307"/>
    </conflict>
    <text>Extended N-terminus.</text>
</comment>
<sequence length="291" mass="32179">MIIIGGSATNGIDESLSKILSIPLVKVENKIFPDGESYIRVPSSIRDEEVLLVQTTDYPQDKHLIELFLIAETIRDLGAKKLTAIVPYLAYSRQDRRFKDGEAISIKTILHILSEVGVNTLVVVEPHKPEELSYFKGELKIVHPYHQIARKIKEIIEDPFILAPDRGALDRARKIAEEINAPYSYIEKERDRTTGEVRIKEAPNINLKGKDVVIIDDIISTGGTIVQATRLAYSLGAKSVTAAAIHLLLVGGAKERLREVGVKTLIGTNTINVNDKDIITIDVSQSIALSL</sequence>
<dbReference type="EC" id="2.7.6.1" evidence="1"/>
<dbReference type="EMBL" id="AE006641">
    <property type="protein sequence ID" value="AAK41307.1"/>
    <property type="status" value="ALT_INIT"/>
    <property type="molecule type" value="Genomic_DNA"/>
</dbReference>
<dbReference type="PIR" id="D90256">
    <property type="entry name" value="D90256"/>
</dbReference>
<dbReference type="RefSeq" id="WP_009989183.1">
    <property type="nucleotide sequence ID" value="NC_002754.1"/>
</dbReference>
<dbReference type="PDB" id="4TWB">
    <property type="method" value="X-ray"/>
    <property type="resolution" value="2.80 A"/>
    <property type="chains" value="A/B/C/D/E/F=1-291"/>
</dbReference>
<dbReference type="PDBsum" id="4TWB"/>
<dbReference type="SMR" id="Q97Z86"/>
<dbReference type="FunCoup" id="Q97Z86">
    <property type="interactions" value="317"/>
</dbReference>
<dbReference type="STRING" id="273057.SSO1045"/>
<dbReference type="PaxDb" id="273057-SSO1045"/>
<dbReference type="EnsemblBacteria" id="AAK41307">
    <property type="protein sequence ID" value="AAK41307"/>
    <property type="gene ID" value="SSO1045"/>
</dbReference>
<dbReference type="GeneID" id="44129974"/>
<dbReference type="KEGG" id="sso:SSO1045"/>
<dbReference type="PATRIC" id="fig|273057.12.peg.1039"/>
<dbReference type="eggNOG" id="arCOG00067">
    <property type="taxonomic scope" value="Archaea"/>
</dbReference>
<dbReference type="HOGENOM" id="CLU_033546_2_2_2"/>
<dbReference type="InParanoid" id="Q97Z86"/>
<dbReference type="PhylomeDB" id="Q97Z86"/>
<dbReference type="BRENDA" id="2.7.6.1">
    <property type="organism ID" value="6163"/>
</dbReference>
<dbReference type="UniPathway" id="UPA00087">
    <property type="reaction ID" value="UER00172"/>
</dbReference>
<dbReference type="EvolutionaryTrace" id="Q97Z86"/>
<dbReference type="Proteomes" id="UP000001974">
    <property type="component" value="Chromosome"/>
</dbReference>
<dbReference type="GO" id="GO:0005737">
    <property type="term" value="C:cytoplasm"/>
    <property type="evidence" value="ECO:0000318"/>
    <property type="project" value="GO_Central"/>
</dbReference>
<dbReference type="GO" id="GO:0002189">
    <property type="term" value="C:ribose phosphate diphosphokinase complex"/>
    <property type="evidence" value="ECO:0000318"/>
    <property type="project" value="GO_Central"/>
</dbReference>
<dbReference type="GO" id="GO:0005524">
    <property type="term" value="F:ATP binding"/>
    <property type="evidence" value="ECO:0007669"/>
    <property type="project" value="UniProtKB-KW"/>
</dbReference>
<dbReference type="GO" id="GO:0016301">
    <property type="term" value="F:kinase activity"/>
    <property type="evidence" value="ECO:0007669"/>
    <property type="project" value="UniProtKB-KW"/>
</dbReference>
<dbReference type="GO" id="GO:0000287">
    <property type="term" value="F:magnesium ion binding"/>
    <property type="evidence" value="ECO:0007669"/>
    <property type="project" value="UniProtKB-UniRule"/>
</dbReference>
<dbReference type="GO" id="GO:0004749">
    <property type="term" value="F:ribose phosphate diphosphokinase activity"/>
    <property type="evidence" value="ECO:0000318"/>
    <property type="project" value="GO_Central"/>
</dbReference>
<dbReference type="GO" id="GO:0006015">
    <property type="term" value="P:5-phosphoribose 1-diphosphate biosynthetic process"/>
    <property type="evidence" value="ECO:0000318"/>
    <property type="project" value="GO_Central"/>
</dbReference>
<dbReference type="GO" id="GO:0006164">
    <property type="term" value="P:purine nucleotide biosynthetic process"/>
    <property type="evidence" value="ECO:0000318"/>
    <property type="project" value="GO_Central"/>
</dbReference>
<dbReference type="CDD" id="cd06223">
    <property type="entry name" value="PRTases_typeI"/>
    <property type="match status" value="1"/>
</dbReference>
<dbReference type="FunFam" id="3.40.50.2020:FF:000074">
    <property type="entry name" value="Ribose-phosphate pyrophosphokinase"/>
    <property type="match status" value="1"/>
</dbReference>
<dbReference type="FunFam" id="3.40.50.2020:FF:000083">
    <property type="entry name" value="Ribose-phosphate pyrophosphokinase"/>
    <property type="match status" value="1"/>
</dbReference>
<dbReference type="Gene3D" id="3.40.50.2020">
    <property type="match status" value="2"/>
</dbReference>
<dbReference type="HAMAP" id="MF_00583_A">
    <property type="entry name" value="RibP_PPkinase_A"/>
    <property type="match status" value="1"/>
</dbReference>
<dbReference type="InterPro" id="IPR029099">
    <property type="entry name" value="Pribosyltran_N"/>
</dbReference>
<dbReference type="InterPro" id="IPR000836">
    <property type="entry name" value="PRibTrfase_dom"/>
</dbReference>
<dbReference type="InterPro" id="IPR029057">
    <property type="entry name" value="PRTase-like"/>
</dbReference>
<dbReference type="InterPro" id="IPR005946">
    <property type="entry name" value="Rib-P_diPkinase"/>
</dbReference>
<dbReference type="InterPro" id="IPR037514">
    <property type="entry name" value="Rib-P_diPkinase_arc"/>
</dbReference>
<dbReference type="NCBIfam" id="TIGR01251">
    <property type="entry name" value="ribP_PPkin"/>
    <property type="match status" value="1"/>
</dbReference>
<dbReference type="PANTHER" id="PTHR10210">
    <property type="entry name" value="RIBOSE-PHOSPHATE DIPHOSPHOKINASE FAMILY MEMBER"/>
    <property type="match status" value="1"/>
</dbReference>
<dbReference type="PANTHER" id="PTHR10210:SF32">
    <property type="entry name" value="RIBOSE-PHOSPHATE PYROPHOSPHOKINASE 2"/>
    <property type="match status" value="1"/>
</dbReference>
<dbReference type="Pfam" id="PF00156">
    <property type="entry name" value="Pribosyltran"/>
    <property type="match status" value="1"/>
</dbReference>
<dbReference type="Pfam" id="PF13793">
    <property type="entry name" value="Pribosyltran_N"/>
    <property type="match status" value="1"/>
</dbReference>
<dbReference type="SMART" id="SM01400">
    <property type="entry name" value="Pribosyltran_N"/>
    <property type="match status" value="1"/>
</dbReference>
<dbReference type="SUPFAM" id="SSF53271">
    <property type="entry name" value="PRTase-like"/>
    <property type="match status" value="1"/>
</dbReference>
<gene>
    <name evidence="1 3" type="primary">prs</name>
    <name type="ordered locus">SSO1045</name>
</gene>
<accession>Q97Z86</accession>
<keyword id="KW-0002">3D-structure</keyword>
<keyword id="KW-0067">ATP-binding</keyword>
<keyword id="KW-0963">Cytoplasm</keyword>
<keyword id="KW-0418">Kinase</keyword>
<keyword id="KW-0460">Magnesium</keyword>
<keyword id="KW-0479">Metal-binding</keyword>
<keyword id="KW-0545">Nucleotide biosynthesis</keyword>
<keyword id="KW-0547">Nucleotide-binding</keyword>
<keyword id="KW-1185">Reference proteome</keyword>
<keyword id="KW-0808">Transferase</keyword>
<feature type="chain" id="PRO_0000141248" description="Ribose-phosphate pyrophosphokinase">
    <location>
        <begin position="1"/>
        <end position="291"/>
    </location>
</feature>
<feature type="active site" evidence="1">
    <location>
        <position position="188"/>
    </location>
</feature>
<feature type="binding site" evidence="1 6 7">
    <location>
        <begin position="34"/>
        <end position="36"/>
    </location>
    <ligand>
        <name>ATP</name>
        <dbReference type="ChEBI" id="CHEBI:30616"/>
    </ligand>
</feature>
<feature type="binding site" evidence="1 6 7">
    <location>
        <begin position="93"/>
        <end position="94"/>
    </location>
    <ligand>
        <name>ATP</name>
        <dbReference type="ChEBI" id="CHEBI:30616"/>
    </ligand>
</feature>
<feature type="binding site" evidence="1">
    <location>
        <position position="127"/>
    </location>
    <ligand>
        <name>Mg(2+)</name>
        <dbReference type="ChEBI" id="CHEBI:18420"/>
        <label>1</label>
    </ligand>
</feature>
<feature type="binding site" evidence="1">
    <location>
        <position position="165"/>
    </location>
    <ligand>
        <name>Mg(2+)</name>
        <dbReference type="ChEBI" id="CHEBI:18420"/>
        <label>2</label>
    </ligand>
</feature>
<feature type="binding site" evidence="1">
    <location>
        <position position="190"/>
    </location>
    <ligand>
        <name>D-ribose 5-phosphate</name>
        <dbReference type="ChEBI" id="CHEBI:78346"/>
    </ligand>
</feature>
<feature type="binding site" evidence="1">
    <location>
        <position position="216"/>
    </location>
    <ligand>
        <name>D-ribose 5-phosphate</name>
        <dbReference type="ChEBI" id="CHEBI:78346"/>
    </ligand>
</feature>
<feature type="binding site" evidence="1 2 7">
    <location>
        <begin position="220"/>
        <end position="224"/>
    </location>
    <ligand>
        <name>D-ribose 5-phosphate</name>
        <dbReference type="ChEBI" id="CHEBI:78346"/>
    </ligand>
</feature>
<feature type="strand" evidence="8">
    <location>
        <begin position="2"/>
        <end position="5"/>
    </location>
</feature>
<feature type="helix" evidence="8">
    <location>
        <begin position="12"/>
        <end position="20"/>
    </location>
</feature>
<feature type="strand" evidence="8">
    <location>
        <begin position="24"/>
        <end position="26"/>
    </location>
</feature>
<feature type="strand" evidence="8">
    <location>
        <begin position="28"/>
        <end position="31"/>
    </location>
</feature>
<feature type="strand" evidence="8">
    <location>
        <begin position="37"/>
        <end position="40"/>
    </location>
</feature>
<feature type="strand" evidence="8">
    <location>
        <begin position="49"/>
        <end position="53"/>
    </location>
</feature>
<feature type="helix" evidence="8">
    <location>
        <begin position="60"/>
        <end position="76"/>
    </location>
</feature>
<feature type="strand" evidence="8">
    <location>
        <begin position="80"/>
        <end position="88"/>
    </location>
</feature>
<feature type="helix" evidence="8">
    <location>
        <begin position="105"/>
        <end position="114"/>
    </location>
</feature>
<feature type="turn" evidence="8">
    <location>
        <begin position="115"/>
        <end position="117"/>
    </location>
</feature>
<feature type="strand" evidence="8">
    <location>
        <begin position="120"/>
        <end position="125"/>
    </location>
</feature>
<feature type="helix" evidence="8">
    <location>
        <begin position="131"/>
        <end position="134"/>
    </location>
</feature>
<feature type="strand" evidence="8">
    <location>
        <begin position="137"/>
        <end position="142"/>
    </location>
</feature>
<feature type="helix" evidence="8">
    <location>
        <begin position="145"/>
        <end position="155"/>
    </location>
</feature>
<feature type="strand" evidence="8">
    <location>
        <begin position="157"/>
        <end position="165"/>
    </location>
</feature>
<feature type="helix" evidence="8">
    <location>
        <begin position="166"/>
        <end position="168"/>
    </location>
</feature>
<feature type="helix" evidence="8">
    <location>
        <begin position="169"/>
        <end position="178"/>
    </location>
</feature>
<feature type="strand" evidence="8">
    <location>
        <begin position="183"/>
        <end position="185"/>
    </location>
</feature>
<feature type="turn" evidence="8">
    <location>
        <begin position="206"/>
        <end position="209"/>
    </location>
</feature>
<feature type="strand" evidence="8">
    <location>
        <begin position="210"/>
        <end position="221"/>
    </location>
</feature>
<feature type="helix" evidence="8">
    <location>
        <begin position="223"/>
        <end position="233"/>
    </location>
</feature>
<feature type="turn" evidence="8">
    <location>
        <begin position="234"/>
        <end position="236"/>
    </location>
</feature>
<feature type="strand" evidence="8">
    <location>
        <begin position="240"/>
        <end position="247"/>
    </location>
</feature>
<feature type="helix" evidence="8">
    <location>
        <begin position="253"/>
        <end position="259"/>
    </location>
</feature>
<feature type="strand" evidence="8">
    <location>
        <begin position="262"/>
        <end position="268"/>
    </location>
</feature>
<feature type="strand" evidence="8">
    <location>
        <begin position="279"/>
        <end position="281"/>
    </location>
</feature>
<feature type="helix" evidence="8">
    <location>
        <begin position="284"/>
        <end position="289"/>
    </location>
</feature>
<protein>
    <recommendedName>
        <fullName evidence="1">Ribose-phosphate pyrophosphokinase</fullName>
        <shortName evidence="1">RPPK</shortName>
        <ecNumber evidence="1">2.7.6.1</ecNumber>
    </recommendedName>
    <alternativeName>
        <fullName evidence="1 3">5-phospho-D-ribosyl alpha-1-diphosphate synthase</fullName>
    </alternativeName>
    <alternativeName>
        <fullName evidence="1">Phosphoribosyl diphosphate synthase</fullName>
    </alternativeName>
    <alternativeName>
        <fullName evidence="1">Phosphoribosyl pyrophosphate synthase</fullName>
        <shortName evidence="1">P-Rib-PP synthase</shortName>
        <shortName evidence="1 3">PRPP synthase</shortName>
        <shortName evidence="1">PRPPase</shortName>
    </alternativeName>
</protein>
<proteinExistence type="evidence at protein level"/>
<name>KPRS_SACS2</name>
<reference key="1">
    <citation type="journal article" date="2001" name="Proc. Natl. Acad. Sci. U.S.A.">
        <title>The complete genome of the crenarchaeon Sulfolobus solfataricus P2.</title>
        <authorList>
            <person name="She Q."/>
            <person name="Singh R.K."/>
            <person name="Confalonieri F."/>
            <person name="Zivanovic Y."/>
            <person name="Allard G."/>
            <person name="Awayez M.J."/>
            <person name="Chan-Weiher C.C.-Y."/>
            <person name="Clausen I.G."/>
            <person name="Curtis B.A."/>
            <person name="De Moors A."/>
            <person name="Erauso G."/>
            <person name="Fletcher C."/>
            <person name="Gordon P.M.K."/>
            <person name="Heikamp-de Jong I."/>
            <person name="Jeffries A.C."/>
            <person name="Kozera C.J."/>
            <person name="Medina N."/>
            <person name="Peng X."/>
            <person name="Thi-Ngoc H.P."/>
            <person name="Redder P."/>
            <person name="Schenk M.E."/>
            <person name="Theriault C."/>
            <person name="Tolstrup N."/>
            <person name="Charlebois R.L."/>
            <person name="Doolittle W.F."/>
            <person name="Duguet M."/>
            <person name="Gaasterland T."/>
            <person name="Garrett R.A."/>
            <person name="Ragan M.A."/>
            <person name="Sensen C.W."/>
            <person name="Van der Oost J."/>
        </authorList>
    </citation>
    <scope>NUCLEOTIDE SEQUENCE [LARGE SCALE GENOMIC DNA]</scope>
    <source>
        <strain>ATCC 35092 / DSM 1617 / JCM 11322 / P2</strain>
    </source>
</reference>
<reference key="2">
    <citation type="journal article" date="2017" name="Microbiol. Mol. Biol. Rev.">
        <title>Phosphoribosyl diphosphate (PRPP): biosynthesis, enzymology, utilization, and metabolic significance.</title>
        <authorList>
            <person name="Hove-Jensen B."/>
            <person name="Andersen K.R."/>
            <person name="Kilstrup M."/>
            <person name="Martinussen J."/>
            <person name="Switzer R.L."/>
            <person name="Willemoes M."/>
        </authorList>
    </citation>
    <scope>REVIEW</scope>
    <scope>SUBUNIT</scope>
</reference>
<reference key="3">
    <citation type="journal article" date="2015" name="Extremophiles">
        <title>Structure of dimeric, recombinant Sulfolobus solfataricus phosphoribosyl diphosphate synthase: a bent dimer defining the adenine specificity of the substrate ATP.</title>
        <authorList>
            <person name="Andersen R.W."/>
            <person name="Leggio L.L."/>
            <person name="Hove-Jensen B."/>
            <person name="Kadziola A."/>
        </authorList>
    </citation>
    <scope>X-RAY CRYSTALLOGRAPHY (2.80 ANGSTROMS) IN COMPLEX WITH ATP ANALOG</scope>
    <scope>FUNCTION</scope>
    <scope>SUBUNIT</scope>
</reference>
<organism>
    <name type="scientific">Saccharolobus solfataricus (strain ATCC 35092 / DSM 1617 / JCM 11322 / P2)</name>
    <name type="common">Sulfolobus solfataricus</name>
    <dbReference type="NCBI Taxonomy" id="273057"/>
    <lineage>
        <taxon>Archaea</taxon>
        <taxon>Thermoproteota</taxon>
        <taxon>Thermoprotei</taxon>
        <taxon>Sulfolobales</taxon>
        <taxon>Sulfolobaceae</taxon>
        <taxon>Saccharolobus</taxon>
    </lineage>
</organism>